<keyword id="KW-0687">Ribonucleoprotein</keyword>
<keyword id="KW-0689">Ribosomal protein</keyword>
<keyword id="KW-0694">RNA-binding</keyword>
<keyword id="KW-0699">rRNA-binding</keyword>
<feature type="chain" id="PRO_1000052492" description="Large ribosomal subunit protein uL4">
    <location>
        <begin position="1"/>
        <end position="201"/>
    </location>
</feature>
<feature type="region of interest" description="Disordered" evidence="2">
    <location>
        <begin position="45"/>
        <end position="72"/>
    </location>
</feature>
<name>RL4_SHEB8</name>
<reference key="1">
    <citation type="submission" date="2007-07" db="EMBL/GenBank/DDBJ databases">
        <title>Complete sequence of chromosome of Shewanella baltica OS185.</title>
        <authorList>
            <consortium name="US DOE Joint Genome Institute"/>
            <person name="Copeland A."/>
            <person name="Lucas S."/>
            <person name="Lapidus A."/>
            <person name="Barry K."/>
            <person name="Glavina del Rio T."/>
            <person name="Dalin E."/>
            <person name="Tice H."/>
            <person name="Pitluck S."/>
            <person name="Sims D."/>
            <person name="Brettin T."/>
            <person name="Bruce D."/>
            <person name="Detter J.C."/>
            <person name="Han C."/>
            <person name="Schmutz J."/>
            <person name="Larimer F."/>
            <person name="Land M."/>
            <person name="Hauser L."/>
            <person name="Kyrpides N."/>
            <person name="Mikhailova N."/>
            <person name="Brettar I."/>
            <person name="Rodrigues J."/>
            <person name="Konstantinidis K."/>
            <person name="Tiedje J."/>
            <person name="Richardson P."/>
        </authorList>
    </citation>
    <scope>NUCLEOTIDE SEQUENCE [LARGE SCALE GENOMIC DNA]</scope>
    <source>
        <strain>OS185</strain>
    </source>
</reference>
<proteinExistence type="inferred from homology"/>
<gene>
    <name evidence="1" type="primary">rplD</name>
    <name type="ordered locus">Shew185_0197</name>
</gene>
<protein>
    <recommendedName>
        <fullName evidence="1">Large ribosomal subunit protein uL4</fullName>
    </recommendedName>
    <alternativeName>
        <fullName evidence="3">50S ribosomal protein L4</fullName>
    </alternativeName>
</protein>
<evidence type="ECO:0000255" key="1">
    <source>
        <dbReference type="HAMAP-Rule" id="MF_01328"/>
    </source>
</evidence>
<evidence type="ECO:0000256" key="2">
    <source>
        <dbReference type="SAM" id="MobiDB-lite"/>
    </source>
</evidence>
<evidence type="ECO:0000305" key="3"/>
<organism>
    <name type="scientific">Shewanella baltica (strain OS185)</name>
    <dbReference type="NCBI Taxonomy" id="402882"/>
    <lineage>
        <taxon>Bacteria</taxon>
        <taxon>Pseudomonadati</taxon>
        <taxon>Pseudomonadota</taxon>
        <taxon>Gammaproteobacteria</taxon>
        <taxon>Alteromonadales</taxon>
        <taxon>Shewanellaceae</taxon>
        <taxon>Shewanella</taxon>
    </lineage>
</organism>
<comment type="function">
    <text evidence="1">One of the primary rRNA binding proteins, this protein initially binds near the 5'-end of the 23S rRNA. It is important during the early stages of 50S assembly. It makes multiple contacts with different domains of the 23S rRNA in the assembled 50S subunit and ribosome.</text>
</comment>
<comment type="function">
    <text evidence="1">Forms part of the polypeptide exit tunnel.</text>
</comment>
<comment type="subunit">
    <text evidence="1">Part of the 50S ribosomal subunit.</text>
</comment>
<comment type="similarity">
    <text evidence="1">Belongs to the universal ribosomal protein uL4 family.</text>
</comment>
<accession>A6WHS9</accession>
<dbReference type="EMBL" id="CP000753">
    <property type="protein sequence ID" value="ABS06368.1"/>
    <property type="molecule type" value="Genomic_DNA"/>
</dbReference>
<dbReference type="RefSeq" id="WP_006083599.1">
    <property type="nucleotide sequence ID" value="NC_009665.1"/>
</dbReference>
<dbReference type="SMR" id="A6WHS9"/>
<dbReference type="GeneID" id="67441761"/>
<dbReference type="KEGG" id="sbm:Shew185_0197"/>
<dbReference type="HOGENOM" id="CLU_041575_5_2_6"/>
<dbReference type="GO" id="GO:1990904">
    <property type="term" value="C:ribonucleoprotein complex"/>
    <property type="evidence" value="ECO:0007669"/>
    <property type="project" value="UniProtKB-KW"/>
</dbReference>
<dbReference type="GO" id="GO:0005840">
    <property type="term" value="C:ribosome"/>
    <property type="evidence" value="ECO:0007669"/>
    <property type="project" value="UniProtKB-KW"/>
</dbReference>
<dbReference type="GO" id="GO:0019843">
    <property type="term" value="F:rRNA binding"/>
    <property type="evidence" value="ECO:0007669"/>
    <property type="project" value="UniProtKB-UniRule"/>
</dbReference>
<dbReference type="GO" id="GO:0003735">
    <property type="term" value="F:structural constituent of ribosome"/>
    <property type="evidence" value="ECO:0007669"/>
    <property type="project" value="InterPro"/>
</dbReference>
<dbReference type="GO" id="GO:0006412">
    <property type="term" value="P:translation"/>
    <property type="evidence" value="ECO:0007669"/>
    <property type="project" value="UniProtKB-UniRule"/>
</dbReference>
<dbReference type="FunFam" id="3.40.1370.10:FF:000001">
    <property type="entry name" value="50S ribosomal protein L4"/>
    <property type="match status" value="1"/>
</dbReference>
<dbReference type="Gene3D" id="3.40.1370.10">
    <property type="match status" value="1"/>
</dbReference>
<dbReference type="HAMAP" id="MF_01328_B">
    <property type="entry name" value="Ribosomal_uL4_B"/>
    <property type="match status" value="1"/>
</dbReference>
<dbReference type="InterPro" id="IPR002136">
    <property type="entry name" value="Ribosomal_uL4"/>
</dbReference>
<dbReference type="InterPro" id="IPR013005">
    <property type="entry name" value="Ribosomal_uL4-like"/>
</dbReference>
<dbReference type="InterPro" id="IPR023574">
    <property type="entry name" value="Ribosomal_uL4_dom_sf"/>
</dbReference>
<dbReference type="NCBIfam" id="TIGR03953">
    <property type="entry name" value="rplD_bact"/>
    <property type="match status" value="1"/>
</dbReference>
<dbReference type="PANTHER" id="PTHR10746">
    <property type="entry name" value="50S RIBOSOMAL PROTEIN L4"/>
    <property type="match status" value="1"/>
</dbReference>
<dbReference type="PANTHER" id="PTHR10746:SF6">
    <property type="entry name" value="LARGE RIBOSOMAL SUBUNIT PROTEIN UL4M"/>
    <property type="match status" value="1"/>
</dbReference>
<dbReference type="Pfam" id="PF00573">
    <property type="entry name" value="Ribosomal_L4"/>
    <property type="match status" value="1"/>
</dbReference>
<dbReference type="SUPFAM" id="SSF52166">
    <property type="entry name" value="Ribosomal protein L4"/>
    <property type="match status" value="1"/>
</dbReference>
<sequence length="201" mass="21979">MELVLKDAQSALEVSETTFGRDFNEALVHQVVVAYAANARQGTRAQKTRAEVTGSGKKPWRQKGTGRARAGSVKGPIWRGGGVTFAAKTQDHSQKVNKKMYRGALKSILSELVRQERLVVVESFGVEAPKTKELKAKLKAMNLEDVLIVTAEVDENLFLAARNLYKVDVRDVAGLDPVSLIAFNTVLVTADAVKQIEEMLA</sequence>